<reference key="1">
    <citation type="submission" date="2008-10" db="EMBL/GenBank/DDBJ databases">
        <title>Genome sequence of Bacillus cereus G9842.</title>
        <authorList>
            <person name="Dodson R.J."/>
            <person name="Durkin A.S."/>
            <person name="Rosovitz M.J."/>
            <person name="Rasko D.A."/>
            <person name="Hoffmaster A."/>
            <person name="Ravel J."/>
            <person name="Sutton G."/>
        </authorList>
    </citation>
    <scope>NUCLEOTIDE SEQUENCE [LARGE SCALE GENOMIC DNA]</scope>
    <source>
        <strain>G9842</strain>
    </source>
</reference>
<proteinExistence type="inferred from homology"/>
<feature type="chain" id="PRO_1000130731" description="Nucleotide-binding protein BCG9842_B5683">
    <location>
        <begin position="1"/>
        <end position="293"/>
    </location>
</feature>
<feature type="binding site" evidence="1">
    <location>
        <begin position="14"/>
        <end position="21"/>
    </location>
    <ligand>
        <name>ATP</name>
        <dbReference type="ChEBI" id="CHEBI:30616"/>
    </ligand>
</feature>
<feature type="binding site" evidence="1">
    <location>
        <begin position="65"/>
        <end position="68"/>
    </location>
    <ligand>
        <name>GTP</name>
        <dbReference type="ChEBI" id="CHEBI:37565"/>
    </ligand>
</feature>
<sequence length="293" mass="33447">MTENNDIKMVIITGMSGAGKTVALQSFEDLGYFCVDNLPPMLLPKFIELMADSKGKMNKVALGIDLRGREFFEHLWGALDDLSERTWIIPHILFLDAKDSTLVTRYKETRRSHPLAPTGLPLKGIEAERDLLTDMKARANIVLDTSDLKPKELREKIVHLFSTETEQAFRVNVMSFGFKYGIPIDADLVFDVRFLPNPYYIPHMKPLTGLDEEVSSYVLKFNETHKFLEKLTDLITFMLPHYKREGKSQLVIAIGCTGGQHRSVTLTEYLGKHLKPEYSVHVSHRDVEKRKGH</sequence>
<gene>
    <name type="ordered locus">BCG9842_B5683</name>
</gene>
<name>Y5683_BACC2</name>
<evidence type="ECO:0000255" key="1">
    <source>
        <dbReference type="HAMAP-Rule" id="MF_00636"/>
    </source>
</evidence>
<protein>
    <recommendedName>
        <fullName evidence="1">Nucleotide-binding protein BCG9842_B5683</fullName>
    </recommendedName>
</protein>
<organism>
    <name type="scientific">Bacillus cereus (strain G9842)</name>
    <dbReference type="NCBI Taxonomy" id="405531"/>
    <lineage>
        <taxon>Bacteria</taxon>
        <taxon>Bacillati</taxon>
        <taxon>Bacillota</taxon>
        <taxon>Bacilli</taxon>
        <taxon>Bacillales</taxon>
        <taxon>Bacillaceae</taxon>
        <taxon>Bacillus</taxon>
        <taxon>Bacillus cereus group</taxon>
    </lineage>
</organism>
<comment type="function">
    <text evidence="1">Displays ATPase and GTPase activities.</text>
</comment>
<comment type="similarity">
    <text evidence="1">Belongs to the RapZ-like family.</text>
</comment>
<accession>B7IPR9</accession>
<keyword id="KW-0067">ATP-binding</keyword>
<keyword id="KW-0342">GTP-binding</keyword>
<keyword id="KW-0547">Nucleotide-binding</keyword>
<dbReference type="EMBL" id="CP001186">
    <property type="protein sequence ID" value="ACK94756.1"/>
    <property type="molecule type" value="Genomic_DNA"/>
</dbReference>
<dbReference type="SMR" id="B7IPR9"/>
<dbReference type="KEGG" id="bcg:BCG9842_B5683"/>
<dbReference type="HOGENOM" id="CLU_059558_0_0_9"/>
<dbReference type="Proteomes" id="UP000006744">
    <property type="component" value="Chromosome"/>
</dbReference>
<dbReference type="GO" id="GO:0005524">
    <property type="term" value="F:ATP binding"/>
    <property type="evidence" value="ECO:0007669"/>
    <property type="project" value="UniProtKB-UniRule"/>
</dbReference>
<dbReference type="GO" id="GO:0005525">
    <property type="term" value="F:GTP binding"/>
    <property type="evidence" value="ECO:0007669"/>
    <property type="project" value="UniProtKB-UniRule"/>
</dbReference>
<dbReference type="Gene3D" id="3.40.50.300">
    <property type="entry name" value="P-loop containing nucleotide triphosphate hydrolases"/>
    <property type="match status" value="1"/>
</dbReference>
<dbReference type="HAMAP" id="MF_00636">
    <property type="entry name" value="RapZ_like"/>
    <property type="match status" value="1"/>
</dbReference>
<dbReference type="InterPro" id="IPR027417">
    <property type="entry name" value="P-loop_NTPase"/>
</dbReference>
<dbReference type="InterPro" id="IPR005337">
    <property type="entry name" value="RapZ-like"/>
</dbReference>
<dbReference type="InterPro" id="IPR053930">
    <property type="entry name" value="RapZ-like_N"/>
</dbReference>
<dbReference type="InterPro" id="IPR053931">
    <property type="entry name" value="RapZ_C"/>
</dbReference>
<dbReference type="NCBIfam" id="NF003828">
    <property type="entry name" value="PRK05416.1"/>
    <property type="match status" value="1"/>
</dbReference>
<dbReference type="PANTHER" id="PTHR30448">
    <property type="entry name" value="RNASE ADAPTER PROTEIN RAPZ"/>
    <property type="match status" value="1"/>
</dbReference>
<dbReference type="PANTHER" id="PTHR30448:SF0">
    <property type="entry name" value="RNASE ADAPTER PROTEIN RAPZ"/>
    <property type="match status" value="1"/>
</dbReference>
<dbReference type="Pfam" id="PF22740">
    <property type="entry name" value="PapZ_C"/>
    <property type="match status" value="1"/>
</dbReference>
<dbReference type="Pfam" id="PF03668">
    <property type="entry name" value="RapZ-like_N"/>
    <property type="match status" value="1"/>
</dbReference>
<dbReference type="PIRSF" id="PIRSF005052">
    <property type="entry name" value="P-loopkin"/>
    <property type="match status" value="1"/>
</dbReference>
<dbReference type="SUPFAM" id="SSF52540">
    <property type="entry name" value="P-loop containing nucleoside triphosphate hydrolases"/>
    <property type="match status" value="1"/>
</dbReference>